<name>RSMH_MYCPN</name>
<sequence length="308" mass="35243">MLSNQPHKSVLLDEVIHNLNIKGDGNYLDLTVGFGGHSQHILEQLTTGTLTGNDMDKDSITFCTELFKDKKNVVLVHDNFANFFNHLKQLKVTKFDGILIDLGVSSYQLDKPERGFSFKHAGPFDMRMHQSDRVPTALDILERLSEEELTHVLKKFGEIAHPKPIAKALKTLINNTKNPTTVEVAETVKAAASNFEKYKSRNYLAKVFQAIRIYLNRELESLEIVLQHIPKLLNNKGRFLVIVFHSLEEKLVRNYIFKLTHFVQPPELPVKLTPPFELITKKPILPTEQEIKTNPRVRSAKLFVIEKK</sequence>
<organism>
    <name type="scientific">Mycoplasma pneumoniae (strain ATCC 29342 / M129 / Subtype 1)</name>
    <name type="common">Mycoplasmoides pneumoniae</name>
    <dbReference type="NCBI Taxonomy" id="272634"/>
    <lineage>
        <taxon>Bacteria</taxon>
        <taxon>Bacillati</taxon>
        <taxon>Mycoplasmatota</taxon>
        <taxon>Mycoplasmoidales</taxon>
        <taxon>Mycoplasmoidaceae</taxon>
        <taxon>Mycoplasmoides</taxon>
    </lineage>
</organism>
<comment type="function">
    <text evidence="1">Specifically methylates the N4 position of cytidine in position 1402 (C1402) of 16S rRNA.</text>
</comment>
<comment type="catalytic activity">
    <reaction evidence="1">
        <text>cytidine(1402) in 16S rRNA + S-adenosyl-L-methionine = N(4)-methylcytidine(1402) in 16S rRNA + S-adenosyl-L-homocysteine + H(+)</text>
        <dbReference type="Rhea" id="RHEA:42928"/>
        <dbReference type="Rhea" id="RHEA-COMP:10286"/>
        <dbReference type="Rhea" id="RHEA-COMP:10287"/>
        <dbReference type="ChEBI" id="CHEBI:15378"/>
        <dbReference type="ChEBI" id="CHEBI:57856"/>
        <dbReference type="ChEBI" id="CHEBI:59789"/>
        <dbReference type="ChEBI" id="CHEBI:74506"/>
        <dbReference type="ChEBI" id="CHEBI:82748"/>
        <dbReference type="EC" id="2.1.1.199"/>
    </reaction>
</comment>
<comment type="subcellular location">
    <subcellularLocation>
        <location evidence="1">Cytoplasm</location>
    </subcellularLocation>
</comment>
<comment type="similarity">
    <text evidence="1">Belongs to the methyltransferase superfamily. RsmH family.</text>
</comment>
<dbReference type="EC" id="2.1.1.199" evidence="1"/>
<dbReference type="EMBL" id="U00089">
    <property type="protein sequence ID" value="AAB96169.1"/>
    <property type="molecule type" value="Genomic_DNA"/>
</dbReference>
<dbReference type="PIR" id="S73847">
    <property type="entry name" value="S73847"/>
</dbReference>
<dbReference type="RefSeq" id="NP_110003.1">
    <property type="nucleotide sequence ID" value="NC_000912.1"/>
</dbReference>
<dbReference type="RefSeq" id="WP_010874671.1">
    <property type="nucleotide sequence ID" value="NZ_OU342337.1"/>
</dbReference>
<dbReference type="SMR" id="P75466"/>
<dbReference type="IntAct" id="P75466">
    <property type="interactions" value="2"/>
</dbReference>
<dbReference type="STRING" id="272634.MPN_315"/>
<dbReference type="EnsemblBacteria" id="AAB96169">
    <property type="protein sequence ID" value="AAB96169"/>
    <property type="gene ID" value="MPN_315"/>
</dbReference>
<dbReference type="KEGG" id="mpn:MPN_315"/>
<dbReference type="PATRIC" id="fig|272634.6.peg.338"/>
<dbReference type="HOGENOM" id="CLU_038422_2_0_14"/>
<dbReference type="OrthoDB" id="9806637at2"/>
<dbReference type="BioCyc" id="MPNE272634:G1GJ3-504-MONOMER"/>
<dbReference type="Proteomes" id="UP000000808">
    <property type="component" value="Chromosome"/>
</dbReference>
<dbReference type="GO" id="GO:0005737">
    <property type="term" value="C:cytoplasm"/>
    <property type="evidence" value="ECO:0007669"/>
    <property type="project" value="UniProtKB-SubCell"/>
</dbReference>
<dbReference type="GO" id="GO:0071424">
    <property type="term" value="F:rRNA (cytosine-N4-)-methyltransferase activity"/>
    <property type="evidence" value="ECO:0007669"/>
    <property type="project" value="UniProtKB-UniRule"/>
</dbReference>
<dbReference type="GO" id="GO:0070475">
    <property type="term" value="P:rRNA base methylation"/>
    <property type="evidence" value="ECO:0007669"/>
    <property type="project" value="UniProtKB-UniRule"/>
</dbReference>
<dbReference type="Gene3D" id="1.10.150.170">
    <property type="entry name" value="Putative methyltransferase TM0872, insert domain"/>
    <property type="match status" value="1"/>
</dbReference>
<dbReference type="Gene3D" id="3.40.50.150">
    <property type="entry name" value="Vaccinia Virus protein VP39"/>
    <property type="match status" value="1"/>
</dbReference>
<dbReference type="HAMAP" id="MF_01007">
    <property type="entry name" value="16SrRNA_methyltr_H"/>
    <property type="match status" value="1"/>
</dbReference>
<dbReference type="InterPro" id="IPR002903">
    <property type="entry name" value="RsmH"/>
</dbReference>
<dbReference type="InterPro" id="IPR023397">
    <property type="entry name" value="SAM-dep_MeTrfase_MraW_recog"/>
</dbReference>
<dbReference type="InterPro" id="IPR029063">
    <property type="entry name" value="SAM-dependent_MTases_sf"/>
</dbReference>
<dbReference type="NCBIfam" id="TIGR00006">
    <property type="entry name" value="16S rRNA (cytosine(1402)-N(4))-methyltransferase RsmH"/>
    <property type="match status" value="1"/>
</dbReference>
<dbReference type="PANTHER" id="PTHR11265:SF0">
    <property type="entry name" value="12S RRNA N4-METHYLCYTIDINE METHYLTRANSFERASE"/>
    <property type="match status" value="1"/>
</dbReference>
<dbReference type="PANTHER" id="PTHR11265">
    <property type="entry name" value="S-ADENOSYL-METHYLTRANSFERASE MRAW"/>
    <property type="match status" value="1"/>
</dbReference>
<dbReference type="Pfam" id="PF01795">
    <property type="entry name" value="Methyltransf_5"/>
    <property type="match status" value="1"/>
</dbReference>
<dbReference type="PIRSF" id="PIRSF004486">
    <property type="entry name" value="MraW"/>
    <property type="match status" value="1"/>
</dbReference>
<dbReference type="SUPFAM" id="SSF81799">
    <property type="entry name" value="Putative methyltransferase TM0872, insert domain"/>
    <property type="match status" value="1"/>
</dbReference>
<dbReference type="SUPFAM" id="SSF53335">
    <property type="entry name" value="S-adenosyl-L-methionine-dependent methyltransferases"/>
    <property type="match status" value="1"/>
</dbReference>
<gene>
    <name evidence="1" type="primary">rsmH</name>
    <name type="synonym">mraW</name>
    <name type="ordered locus">MPN_315</name>
    <name type="ORF">MP521</name>
</gene>
<keyword id="KW-0963">Cytoplasm</keyword>
<keyword id="KW-0489">Methyltransferase</keyword>
<keyword id="KW-1185">Reference proteome</keyword>
<keyword id="KW-0698">rRNA processing</keyword>
<keyword id="KW-0949">S-adenosyl-L-methionine</keyword>
<keyword id="KW-0808">Transferase</keyword>
<evidence type="ECO:0000255" key="1">
    <source>
        <dbReference type="HAMAP-Rule" id="MF_01007"/>
    </source>
</evidence>
<feature type="chain" id="PRO_0000108665" description="Ribosomal RNA small subunit methyltransferase H">
    <location>
        <begin position="1"/>
        <end position="308"/>
    </location>
</feature>
<feature type="binding site" evidence="1">
    <location>
        <begin position="35"/>
        <end position="37"/>
    </location>
    <ligand>
        <name>S-adenosyl-L-methionine</name>
        <dbReference type="ChEBI" id="CHEBI:59789"/>
    </ligand>
</feature>
<feature type="binding site" evidence="1">
    <location>
        <position position="54"/>
    </location>
    <ligand>
        <name>S-adenosyl-L-methionine</name>
        <dbReference type="ChEBI" id="CHEBI:59789"/>
    </ligand>
</feature>
<feature type="binding site" evidence="1">
    <location>
        <position position="80"/>
    </location>
    <ligand>
        <name>S-adenosyl-L-methionine</name>
        <dbReference type="ChEBI" id="CHEBI:59789"/>
    </ligand>
</feature>
<feature type="binding site" evidence="1">
    <location>
        <position position="101"/>
    </location>
    <ligand>
        <name>S-adenosyl-L-methionine</name>
        <dbReference type="ChEBI" id="CHEBI:59789"/>
    </ligand>
</feature>
<feature type="binding site" evidence="1">
    <location>
        <position position="108"/>
    </location>
    <ligand>
        <name>S-adenosyl-L-methionine</name>
        <dbReference type="ChEBI" id="CHEBI:59789"/>
    </ligand>
</feature>
<accession>P75466</accession>
<proteinExistence type="inferred from homology"/>
<reference key="1">
    <citation type="journal article" date="1996" name="Nucleic Acids Res.">
        <title>Complete sequence analysis of the genome of the bacterium Mycoplasma pneumoniae.</title>
        <authorList>
            <person name="Himmelreich R."/>
            <person name="Hilbert H."/>
            <person name="Plagens H."/>
            <person name="Pirkl E."/>
            <person name="Li B.-C."/>
            <person name="Herrmann R."/>
        </authorList>
    </citation>
    <scope>NUCLEOTIDE SEQUENCE [LARGE SCALE GENOMIC DNA]</scope>
    <source>
        <strain>ATCC 29342 / M129 / Subtype 1</strain>
    </source>
</reference>
<protein>
    <recommendedName>
        <fullName evidence="1">Ribosomal RNA small subunit methyltransferase H</fullName>
        <ecNumber evidence="1">2.1.1.199</ecNumber>
    </recommendedName>
    <alternativeName>
        <fullName evidence="1">16S rRNA m(4)C1402 methyltransferase</fullName>
    </alternativeName>
    <alternativeName>
        <fullName evidence="1">rRNA (cytosine-N(4)-)-methyltransferase RsmH</fullName>
    </alternativeName>
</protein>